<protein>
    <recommendedName>
        <fullName evidence="1">Transcriptional repressor NrdR</fullName>
    </recommendedName>
</protein>
<evidence type="ECO:0000255" key="1">
    <source>
        <dbReference type="HAMAP-Rule" id="MF_00440"/>
    </source>
</evidence>
<organism>
    <name type="scientific">Oceanobacillus iheyensis (strain DSM 14371 / CIP 107618 / JCM 11309 / KCTC 3954 / HTE831)</name>
    <dbReference type="NCBI Taxonomy" id="221109"/>
    <lineage>
        <taxon>Bacteria</taxon>
        <taxon>Bacillati</taxon>
        <taxon>Bacillota</taxon>
        <taxon>Bacilli</taxon>
        <taxon>Bacillales</taxon>
        <taxon>Bacillaceae</taxon>
        <taxon>Oceanobacillus</taxon>
    </lineage>
</organism>
<sequence length="157" mass="18308">MRCSNCQNKNTKVLDSRPIEEGRAIRRRRECERCGFRFTTFERIEEVPLIVVKKDGVRQEFSREKLMRGLIRACEKRPVALETIESIALEVEKKLRNAGNPEVSSNSIGEMVMELLSKVDEVSYVRFASVYRQFKDITVFLDELKDIINTDKSMKDK</sequence>
<feature type="chain" id="PRO_0000182326" description="Transcriptional repressor NrdR">
    <location>
        <begin position="1"/>
        <end position="157"/>
    </location>
</feature>
<feature type="domain" description="ATP-cone" evidence="1">
    <location>
        <begin position="49"/>
        <end position="139"/>
    </location>
</feature>
<feature type="zinc finger region" evidence="1">
    <location>
        <begin position="3"/>
        <end position="34"/>
    </location>
</feature>
<name>NRDR_OCEIH</name>
<proteinExistence type="inferred from homology"/>
<reference key="1">
    <citation type="journal article" date="2002" name="Nucleic Acids Res.">
        <title>Genome sequence of Oceanobacillus iheyensis isolated from the Iheya Ridge and its unexpected adaptive capabilities to extreme environments.</title>
        <authorList>
            <person name="Takami H."/>
            <person name="Takaki Y."/>
            <person name="Uchiyama I."/>
        </authorList>
    </citation>
    <scope>NUCLEOTIDE SEQUENCE [LARGE SCALE GENOMIC DNA]</scope>
    <source>
        <strain>DSM 14371 / CIP 107618 / JCM 11309 / KCTC 3954 / HTE831</strain>
    </source>
</reference>
<comment type="function">
    <text evidence="1">Negatively regulates transcription of bacterial ribonucleotide reductase nrd genes and operons by binding to NrdR-boxes.</text>
</comment>
<comment type="cofactor">
    <cofactor evidence="1">
        <name>Zn(2+)</name>
        <dbReference type="ChEBI" id="CHEBI:29105"/>
    </cofactor>
    <text evidence="1">Binds 1 zinc ion.</text>
</comment>
<comment type="similarity">
    <text evidence="1">Belongs to the NrdR family.</text>
</comment>
<keyword id="KW-0067">ATP-binding</keyword>
<keyword id="KW-0238">DNA-binding</keyword>
<keyword id="KW-0479">Metal-binding</keyword>
<keyword id="KW-0547">Nucleotide-binding</keyword>
<keyword id="KW-1185">Reference proteome</keyword>
<keyword id="KW-0678">Repressor</keyword>
<keyword id="KW-0804">Transcription</keyword>
<keyword id="KW-0805">Transcription regulation</keyword>
<keyword id="KW-0862">Zinc</keyword>
<keyword id="KW-0863">Zinc-finger</keyword>
<gene>
    <name evidence="1" type="primary">nrdR</name>
    <name type="ordered locus">OB2158</name>
</gene>
<accession>Q8EPF0</accession>
<dbReference type="EMBL" id="BA000028">
    <property type="protein sequence ID" value="BAC14114.1"/>
    <property type="molecule type" value="Genomic_DNA"/>
</dbReference>
<dbReference type="RefSeq" id="WP_011066552.1">
    <property type="nucleotide sequence ID" value="NC_004193.1"/>
</dbReference>
<dbReference type="SMR" id="Q8EPF0"/>
<dbReference type="STRING" id="221109.gene:10734406"/>
<dbReference type="KEGG" id="oih:OB2158"/>
<dbReference type="eggNOG" id="COG1327">
    <property type="taxonomic scope" value="Bacteria"/>
</dbReference>
<dbReference type="HOGENOM" id="CLU_108412_0_0_9"/>
<dbReference type="OrthoDB" id="9807461at2"/>
<dbReference type="PhylomeDB" id="Q8EPF0"/>
<dbReference type="Proteomes" id="UP000000822">
    <property type="component" value="Chromosome"/>
</dbReference>
<dbReference type="GO" id="GO:0005524">
    <property type="term" value="F:ATP binding"/>
    <property type="evidence" value="ECO:0007669"/>
    <property type="project" value="UniProtKB-KW"/>
</dbReference>
<dbReference type="GO" id="GO:0003677">
    <property type="term" value="F:DNA binding"/>
    <property type="evidence" value="ECO:0007669"/>
    <property type="project" value="UniProtKB-KW"/>
</dbReference>
<dbReference type="GO" id="GO:0008270">
    <property type="term" value="F:zinc ion binding"/>
    <property type="evidence" value="ECO:0007669"/>
    <property type="project" value="UniProtKB-UniRule"/>
</dbReference>
<dbReference type="GO" id="GO:0045892">
    <property type="term" value="P:negative regulation of DNA-templated transcription"/>
    <property type="evidence" value="ECO:0007669"/>
    <property type="project" value="UniProtKB-UniRule"/>
</dbReference>
<dbReference type="HAMAP" id="MF_00440">
    <property type="entry name" value="NrdR"/>
    <property type="match status" value="1"/>
</dbReference>
<dbReference type="InterPro" id="IPR005144">
    <property type="entry name" value="ATP-cone_dom"/>
</dbReference>
<dbReference type="InterPro" id="IPR055173">
    <property type="entry name" value="NrdR-like_N"/>
</dbReference>
<dbReference type="InterPro" id="IPR003796">
    <property type="entry name" value="RNR_NrdR-like"/>
</dbReference>
<dbReference type="NCBIfam" id="TIGR00244">
    <property type="entry name" value="transcriptional regulator NrdR"/>
    <property type="match status" value="1"/>
</dbReference>
<dbReference type="PANTHER" id="PTHR30455">
    <property type="entry name" value="TRANSCRIPTIONAL REPRESSOR NRDR"/>
    <property type="match status" value="1"/>
</dbReference>
<dbReference type="PANTHER" id="PTHR30455:SF2">
    <property type="entry name" value="TRANSCRIPTIONAL REPRESSOR NRDR"/>
    <property type="match status" value="1"/>
</dbReference>
<dbReference type="Pfam" id="PF03477">
    <property type="entry name" value="ATP-cone"/>
    <property type="match status" value="1"/>
</dbReference>
<dbReference type="Pfam" id="PF22811">
    <property type="entry name" value="Zn_ribbon_NrdR"/>
    <property type="match status" value="1"/>
</dbReference>
<dbReference type="PROSITE" id="PS51161">
    <property type="entry name" value="ATP_CONE"/>
    <property type="match status" value="1"/>
</dbReference>